<comment type="function">
    <text evidence="1">Involved in transcription antitermination. Required for transcription of ribosomal RNA (rRNA) genes. Binds specifically to the boxA antiterminator sequence of the ribosomal RNA (rrn) operons.</text>
</comment>
<comment type="similarity">
    <text evidence="1">Belongs to the NusB family.</text>
</comment>
<feature type="chain" id="PRO_1000092541" description="Transcription antitermination protein NusB">
    <location>
        <begin position="1"/>
        <end position="133"/>
    </location>
</feature>
<reference key="1">
    <citation type="submission" date="2008-05" db="EMBL/GenBank/DDBJ databases">
        <title>Complete genome sequence of Clostridium botulinum E3 str. Alaska E43.</title>
        <authorList>
            <person name="Brinkac L.M."/>
            <person name="Brown J.L."/>
            <person name="Bruce D."/>
            <person name="Detter C."/>
            <person name="Munk C."/>
            <person name="Smith L.A."/>
            <person name="Smith T.J."/>
            <person name="Sutton G."/>
            <person name="Brettin T.S."/>
        </authorList>
    </citation>
    <scope>NUCLEOTIDE SEQUENCE [LARGE SCALE GENOMIC DNA]</scope>
    <source>
        <strain>Alaska E43 / Type E3</strain>
    </source>
</reference>
<protein>
    <recommendedName>
        <fullName evidence="1">Transcription antitermination protein NusB</fullName>
    </recommendedName>
    <alternativeName>
        <fullName evidence="1">Antitermination factor NusB</fullName>
    </alternativeName>
</protein>
<gene>
    <name evidence="1" type="primary">nusB</name>
    <name type="ordered locus">CLH_2171</name>
</gene>
<name>NUSB_CLOBA</name>
<keyword id="KW-0694">RNA-binding</keyword>
<keyword id="KW-0804">Transcription</keyword>
<keyword id="KW-0889">Transcription antitermination</keyword>
<keyword id="KW-0805">Transcription regulation</keyword>
<evidence type="ECO:0000255" key="1">
    <source>
        <dbReference type="HAMAP-Rule" id="MF_00073"/>
    </source>
</evidence>
<dbReference type="EMBL" id="CP001078">
    <property type="protein sequence ID" value="ACD53940.1"/>
    <property type="molecule type" value="Genomic_DNA"/>
</dbReference>
<dbReference type="RefSeq" id="WP_012451742.1">
    <property type="nucleotide sequence ID" value="NC_010723.1"/>
</dbReference>
<dbReference type="SMR" id="B2V4R8"/>
<dbReference type="KEGG" id="cbt:CLH_2171"/>
<dbReference type="HOGENOM" id="CLU_087843_3_1_9"/>
<dbReference type="GO" id="GO:0005829">
    <property type="term" value="C:cytosol"/>
    <property type="evidence" value="ECO:0007669"/>
    <property type="project" value="TreeGrafter"/>
</dbReference>
<dbReference type="GO" id="GO:0003723">
    <property type="term" value="F:RNA binding"/>
    <property type="evidence" value="ECO:0007669"/>
    <property type="project" value="UniProtKB-UniRule"/>
</dbReference>
<dbReference type="GO" id="GO:0006353">
    <property type="term" value="P:DNA-templated transcription termination"/>
    <property type="evidence" value="ECO:0007669"/>
    <property type="project" value="UniProtKB-UniRule"/>
</dbReference>
<dbReference type="GO" id="GO:0031564">
    <property type="term" value="P:transcription antitermination"/>
    <property type="evidence" value="ECO:0007669"/>
    <property type="project" value="UniProtKB-KW"/>
</dbReference>
<dbReference type="Gene3D" id="1.10.940.10">
    <property type="entry name" value="NusB-like"/>
    <property type="match status" value="1"/>
</dbReference>
<dbReference type="HAMAP" id="MF_00073">
    <property type="entry name" value="NusB"/>
    <property type="match status" value="1"/>
</dbReference>
<dbReference type="InterPro" id="IPR035926">
    <property type="entry name" value="NusB-like_sf"/>
</dbReference>
<dbReference type="InterPro" id="IPR011605">
    <property type="entry name" value="NusB_fam"/>
</dbReference>
<dbReference type="InterPro" id="IPR006027">
    <property type="entry name" value="NusB_RsmB_TIM44"/>
</dbReference>
<dbReference type="NCBIfam" id="TIGR01951">
    <property type="entry name" value="nusB"/>
    <property type="match status" value="1"/>
</dbReference>
<dbReference type="PANTHER" id="PTHR11078:SF3">
    <property type="entry name" value="ANTITERMINATION NUSB DOMAIN-CONTAINING PROTEIN"/>
    <property type="match status" value="1"/>
</dbReference>
<dbReference type="PANTHER" id="PTHR11078">
    <property type="entry name" value="N UTILIZATION SUBSTANCE PROTEIN B-RELATED"/>
    <property type="match status" value="1"/>
</dbReference>
<dbReference type="Pfam" id="PF01029">
    <property type="entry name" value="NusB"/>
    <property type="match status" value="1"/>
</dbReference>
<dbReference type="SUPFAM" id="SSF48013">
    <property type="entry name" value="NusB-like"/>
    <property type="match status" value="1"/>
</dbReference>
<organism>
    <name type="scientific">Clostridium botulinum (strain Alaska E43 / Type E3)</name>
    <dbReference type="NCBI Taxonomy" id="508767"/>
    <lineage>
        <taxon>Bacteria</taxon>
        <taxon>Bacillati</taxon>
        <taxon>Bacillota</taxon>
        <taxon>Clostridia</taxon>
        <taxon>Eubacteriales</taxon>
        <taxon>Clostridiaceae</taxon>
        <taxon>Clostridium</taxon>
    </lineage>
</organism>
<sequence>MNRKLSREKAMELLFGMTLNTDNCEETLGNFIDNYESDIKELDITYIKRILIGVENNKDNIDEAISKNLCNWKIDRISKVNLCILRLAVYELLHDEEIPNRVAINEALEITKKYSDEKSVSFINGVLDNILKK</sequence>
<proteinExistence type="inferred from homology"/>
<accession>B2V4R8</accession>